<proteinExistence type="evidence at protein level"/>
<feature type="chain" id="PRO_0000184011" description="Beta-2-syntrophin">
    <location>
        <begin position="1"/>
        <end position="540"/>
    </location>
</feature>
<feature type="domain" description="PDZ" evidence="3">
    <location>
        <begin position="115"/>
        <end position="198"/>
    </location>
</feature>
<feature type="domain" description="PH 1" evidence="4">
    <location>
        <begin position="163"/>
        <end position="300"/>
    </location>
</feature>
<feature type="domain" description="PH 2" evidence="4">
    <location>
        <begin position="325"/>
        <end position="437"/>
    </location>
</feature>
<feature type="domain" description="SU">
    <location>
        <begin position="484"/>
        <end position="540"/>
    </location>
</feature>
<feature type="region of interest" description="Disordered" evidence="5">
    <location>
        <begin position="73"/>
        <end position="114"/>
    </location>
</feature>
<feature type="region of interest" description="Disordered" evidence="5">
    <location>
        <begin position="220"/>
        <end position="240"/>
    </location>
</feature>
<feature type="region of interest" description="Calmodulin-binding" evidence="1">
    <location>
        <begin position="518"/>
        <end position="540"/>
    </location>
</feature>
<feature type="compositionally biased region" description="Low complexity" evidence="5">
    <location>
        <begin position="81"/>
        <end position="92"/>
    </location>
</feature>
<feature type="compositionally biased region" description="Pro residues" evidence="5">
    <location>
        <begin position="93"/>
        <end position="102"/>
    </location>
</feature>
<feature type="compositionally biased region" description="Low complexity" evidence="5">
    <location>
        <begin position="103"/>
        <end position="112"/>
    </location>
</feature>
<feature type="compositionally biased region" description="Low complexity" evidence="5">
    <location>
        <begin position="222"/>
        <end position="231"/>
    </location>
</feature>
<feature type="modified residue" description="Phosphoserine" evidence="16 17 18 19">
    <location>
        <position position="95"/>
    </location>
</feature>
<feature type="modified residue" description="Phosphoserine" evidence="13 14 17 18 19">
    <location>
        <position position="110"/>
    </location>
</feature>
<feature type="modified residue" description="Phosphoserine" evidence="18">
    <location>
        <position position="129"/>
    </location>
</feature>
<feature type="modified residue" description="Phosphoserine" evidence="19">
    <location>
        <position position="211"/>
    </location>
</feature>
<feature type="modified residue" description="Phosphoserine" evidence="15 17 18">
    <location>
        <position position="222"/>
    </location>
</feature>
<feature type="modified residue" description="Phosphoserine" evidence="15">
    <location>
        <position position="233"/>
    </location>
</feature>
<feature type="modified residue" description="Phosphoserine" evidence="15 17 18">
    <location>
        <position position="393"/>
    </location>
</feature>
<feature type="modified residue" description="Phosphoserine" evidence="18">
    <location>
        <position position="395"/>
    </location>
</feature>
<feature type="splice variant" id="VSP_006358" description="In isoform 2." evidence="11">
    <original>LI</original>
    <variation>QN</variation>
    <location>
        <begin position="266"/>
        <end position="267"/>
    </location>
</feature>
<feature type="splice variant" id="VSP_006359" description="In isoform 2." evidence="11">
    <location>
        <begin position="268"/>
        <end position="540"/>
    </location>
</feature>
<feature type="sequence variant" id="VAR_073697" evidence="9">
    <original>S</original>
    <variation>R</variation>
    <location>
        <position position="376"/>
    </location>
</feature>
<feature type="sequence variant" id="VAR_014076" description="In dbSNP:rs1058482.">
    <original>D</original>
    <variation>E</variation>
    <location>
        <position position="424"/>
    </location>
</feature>
<feature type="strand" evidence="20">
    <location>
        <begin position="113"/>
        <end position="119"/>
    </location>
</feature>
<feature type="strand" evidence="20">
    <location>
        <begin position="127"/>
        <end position="133"/>
    </location>
</feature>
<feature type="helix" evidence="20">
    <location>
        <begin position="134"/>
        <end position="136"/>
    </location>
</feature>
<feature type="strand" evidence="20">
    <location>
        <begin position="138"/>
        <end position="145"/>
    </location>
</feature>
<feature type="helix" evidence="20">
    <location>
        <begin position="150"/>
        <end position="154"/>
    </location>
</feature>
<feature type="strand" evidence="20">
    <location>
        <begin position="161"/>
        <end position="166"/>
    </location>
</feature>
<feature type="helix" evidence="20">
    <location>
        <begin position="176"/>
        <end position="184"/>
    </location>
</feature>
<feature type="strand" evidence="20">
    <location>
        <begin position="188"/>
        <end position="196"/>
    </location>
</feature>
<comment type="function">
    <text>Adapter protein that binds to and probably organizes the subcellular localization of a variety of membrane proteins. May link various receptors to the actin cytoskeleton and the dystrophin glycoprotein complex. May play a role in the regulation of secretory granules via its interaction with PTPRN.</text>
</comment>
<comment type="subunit">
    <text evidence="1 2 6 7 8 10 12">Monomer and homodimer (Probable). Interacts with the other members of the syntrophin family: SNTA1 and SNTB1; and with the sodium channel proteins SCN4A and SCN5A. Interacts with SAST, MAST205, microtubules and microtubule-associated proteins (By similarity). Interacts with the dystrophin protein DMD and related proteins DTNA and UTRN, and with the neuroregulin receptor ERBB4. Interacts with PTPRN when phosphorylated, protecting PTPRN from protein cleavage by CAPN1. Dephosphorylation upon insulin stimulation disrupts the interaction with PTPRN and results in the cleavage of PTPRN. Interacts with DTNB (By similarity).</text>
</comment>
<comment type="interaction">
    <interactant intactId="EBI-80411">
        <id>Q13425</id>
    </interactant>
    <interactant intactId="EBI-489993">
        <id>P25100</id>
        <label>ADRA1D</label>
    </interactant>
    <organismsDiffer>false</organismsDiffer>
    <experiments>16</experiments>
</comment>
<comment type="interaction">
    <interactant intactId="EBI-80411">
        <id>Q13425</id>
    </interactant>
    <interactant intactId="EBI-1215506">
        <id>O14936</id>
        <label>CASK</label>
    </interactant>
    <organismsDiffer>false</organismsDiffer>
    <experiments>6</experiments>
</comment>
<comment type="interaction">
    <interactant intactId="EBI-80411">
        <id>Q13425</id>
    </interactant>
    <interactant intactId="EBI-2654750">
        <id>Q96G28</id>
        <label>CFAP36</label>
    </interactant>
    <organismsDiffer>false</organismsDiffer>
    <experiments>3</experiments>
</comment>
<comment type="interaction">
    <interactant intactId="EBI-80411">
        <id>Q13425</id>
    </interactant>
    <interactant intactId="EBI-295827">
        <id>P11532</id>
        <label>DMD</label>
    </interactant>
    <organismsDiffer>false</organismsDiffer>
    <experiments>5</experiments>
</comment>
<comment type="interaction">
    <interactant intactId="EBI-80411">
        <id>Q13425</id>
    </interactant>
    <interactant intactId="EBI-295856">
        <id>P46939</id>
        <label>UTRN</label>
    </interactant>
    <organismsDiffer>false</organismsDiffer>
    <experiments>5</experiments>
</comment>
<comment type="subcellular location">
    <subcellularLocation>
        <location>Membrane</location>
    </subcellularLocation>
    <subcellularLocation>
        <location>Cytoplasmic vesicle</location>
        <location>Secretory vesicle membrane</location>
        <topology>Peripheral membrane protein</topology>
    </subcellularLocation>
    <subcellularLocation>
        <location evidence="1">Cell junction</location>
    </subcellularLocation>
    <subcellularLocation>
        <location>Cytoplasm</location>
        <location>Cytoskeleton</location>
    </subcellularLocation>
    <text evidence="1">Membrane-associated. In muscle, it is exclusively localized at the neuromuscular junction (By similarity). In insulinoma cell line, it is enriched in secretory granules.</text>
</comment>
<comment type="alternative products">
    <event type="alternative splicing"/>
    <isoform>
        <id>Q13425-1</id>
        <name>1</name>
        <name>Beta2-syntrophin58</name>
        <sequence type="displayed"/>
    </isoform>
    <isoform>
        <id>Q13425-2</id>
        <name>2</name>
        <name>Beta2-syntrophin28</name>
        <sequence type="described" ref="VSP_006358 VSP_006359"/>
    </isoform>
</comment>
<comment type="tissue specificity">
    <text>Ubiquitous. Isoform 1 is the predominant isoform. Weak level of isoform 2 is present in all tested tissues, except in liver and heart where it is highly expressed.</text>
</comment>
<comment type="domain">
    <text evidence="1">The PH 1 domain mediates the oligomerization in a calcium dependent manner.</text>
</comment>
<comment type="domain">
    <text evidence="1">The PDZ domain binds to the last three or four amino acids of ion channels and receptor proteins. The association with dystrophin or related proteins probably leaves the PDZ domain available to recruit proteins to the membrane (By similarity).</text>
</comment>
<comment type="domain">
    <text evidence="1">The SU domain binds calmodulin in a calcium-dependent manner.</text>
</comment>
<comment type="PTM">
    <text>Phosphorylated. Partially dephosphorylated upon insulin stimulation.</text>
</comment>
<comment type="miscellaneous">
    <molecule>Isoform 2</molecule>
    <text evidence="12">Lacks domains required for interaction with dystrophin related proteins. May be produced at very low levels due to a premature stop codon in the mRNA, leading to nonsense-mediated mRNA decay.</text>
</comment>
<comment type="similarity">
    <text evidence="12">Belongs to the syntrophin family.</text>
</comment>
<protein>
    <recommendedName>
        <fullName>Beta-2-syntrophin</fullName>
    </recommendedName>
    <alternativeName>
        <fullName>59 kDa dystrophin-associated protein A1 basic component 2</fullName>
    </alternativeName>
    <alternativeName>
        <fullName>Syntrophin-3</fullName>
        <shortName>SNT3</shortName>
    </alternativeName>
    <alternativeName>
        <fullName>Syntrophin-like</fullName>
        <shortName>SNTL</shortName>
    </alternativeName>
</protein>
<gene>
    <name type="primary">SNTB2</name>
    <name type="synonym">D16S2531E</name>
    <name type="synonym">SNT2B2</name>
    <name type="synonym">SNTL</name>
</gene>
<sequence>MRVAAATAAAGAGPAMAVWTRATKAGLVELLLRERWVRVVAELSGESLSLTGDAAAAELEPALGPAAAAFNGLPNGGGAGDSLPGSPSRGLGPPSPPAPPRGPAGEAGASPPVRRVRVVKQEAGGLGISIKGGRENRMPILISKIFPGLAADQSRALRLGDAILSVNGTDLRQATHDQAVQALKRAGKEVLLEVKFIREVTPYIKKPSLVSDLPWEGAAPQSPSFSGSEDSGSPKHQNSTKDRKIIPLKMCFAARNLSMPDLENRLIELHSPDSRNTLILRCKDTATAHSWFVAIHTNIMALLPQVLAELNAMLGATSTAGGSKEVKHIAWLAEQAKLDGGRQQWRPVLMAVTEKDLLLYDCMPWTRDAWASPCHSYPLVATRLVHSGSGCRSPSLGSDLTFATRTGSRQGIEMHLFRVETHRDLSSWTRILVQGCHAAAELIKEVSLGCMLNGQEVRLTIHYENGFTISRENGGSSSILYRYPFERLKMSADDGIRNLYLDFGGPEGELTMDLHSCPKPIVFVLHTFLSAKVTRMGLLV</sequence>
<keyword id="KW-0002">3D-structure</keyword>
<keyword id="KW-0009">Actin-binding</keyword>
<keyword id="KW-0025">Alternative splicing</keyword>
<keyword id="KW-0106">Calcium</keyword>
<keyword id="KW-0112">Calmodulin-binding</keyword>
<keyword id="KW-0965">Cell junction</keyword>
<keyword id="KW-0963">Cytoplasm</keyword>
<keyword id="KW-0968">Cytoplasmic vesicle</keyword>
<keyword id="KW-0206">Cytoskeleton</keyword>
<keyword id="KW-0472">Membrane</keyword>
<keyword id="KW-0493">Microtubule</keyword>
<keyword id="KW-0597">Phosphoprotein</keyword>
<keyword id="KW-1267">Proteomics identification</keyword>
<keyword id="KW-1185">Reference proteome</keyword>
<keyword id="KW-0677">Repeat</keyword>
<reference key="1">
    <citation type="journal article" date="1996" name="J. Biol. Chem.">
        <title>The three human syntrophin genes are expressed in diverse tissues, have distinct chromosomal locations, and each bind to dystrophin and its relatives.</title>
        <authorList>
            <person name="Ahn A.H."/>
            <person name="Feener C.A."/>
            <person name="Gussoni E."/>
            <person name="Yoshida M."/>
            <person name="Ozawa E."/>
            <person name="Kunkel L.M."/>
        </authorList>
    </citation>
    <scope>NUCLEOTIDE SEQUENCE [MRNA] (ISOFORM 1)</scope>
    <scope>INTERACTION WITH DMD; DTNA AND UTRN</scope>
    <source>
        <tissue>Muscle</tissue>
    </source>
</reference>
<reference key="2">
    <citation type="journal article" date="2000" name="Eur. J. Cell Biol.">
        <title>The receptor tyrosine phosphatase-like protein ICA512 binds the PDZ domains of beta2-syntrophin and nNOS in pancreatic beta-cells.</title>
        <authorList>
            <person name="Ort T."/>
            <person name="Maksimova E."/>
            <person name="Dirkx R."/>
            <person name="Kachinsky A.M."/>
            <person name="Berghs S."/>
            <person name="Froehner S.C."/>
            <person name="Solimena M."/>
        </authorList>
    </citation>
    <scope>NUCLEOTIDE SEQUENCE [MRNA] (ISOFORM 2)</scope>
    <scope>INTERACTION WITH PTPRN</scope>
    <source>
        <tissue>Brain</tissue>
    </source>
</reference>
<reference key="3">
    <citation type="journal article" date="2004" name="Genome Res.">
        <title>The status, quality, and expansion of the NIH full-length cDNA project: the Mammalian Gene Collection (MGC).</title>
        <authorList>
            <consortium name="The MGC Project Team"/>
        </authorList>
    </citation>
    <scope>NUCLEOTIDE SEQUENCE [LARGE SCALE MRNA] (ISOFORM 1)</scope>
    <source>
        <tissue>Mammary gland</tissue>
    </source>
</reference>
<reference key="4">
    <citation type="journal article" date="2000" name="Proc. Natl. Acad. Sci. U.S.A.">
        <title>The neuregulin receptor ErbB-4 interacts with PDZ-containing proteins at neuronal synapses.</title>
        <authorList>
            <person name="Garcia R.A."/>
            <person name="Vasudevan K."/>
            <person name="Buonanno A."/>
        </authorList>
    </citation>
    <scope>INTERACTION WITH ERBB4</scope>
</reference>
<reference key="5">
    <citation type="journal article" date="2001" name="EMBO J.">
        <title>Dephosphorylation of beta2-syntrophin and Ca2+/mu-calpain-mediated cleavage of ICA512 upon stimulation of insulin secretion.</title>
        <authorList>
            <person name="Ort T."/>
            <person name="Voronov S."/>
            <person name="Guo J."/>
            <person name="Zawalich K."/>
            <person name="Froehner S.C."/>
            <person name="Zawalich W."/>
            <person name="Solimena M."/>
        </authorList>
    </citation>
    <scope>INTERACTION WITH PTPRN</scope>
</reference>
<reference key="6">
    <citation type="journal article" date="2004" name="Genome Biol.">
        <title>An unappreciated role for RNA surveillance.</title>
        <authorList>
            <person name="Hillman R.T."/>
            <person name="Green R.E."/>
            <person name="Brenner S.E."/>
        </authorList>
    </citation>
    <scope>SPLICE ISOFORM(S) THAT ARE POTENTIAL NMD TARGET(S)</scope>
</reference>
<reference key="7">
    <citation type="journal article" date="2006" name="Cell">
        <title>Global, in vivo, and site-specific phosphorylation dynamics in signaling networks.</title>
        <authorList>
            <person name="Olsen J.V."/>
            <person name="Blagoev B."/>
            <person name="Gnad F."/>
            <person name="Macek B."/>
            <person name="Kumar C."/>
            <person name="Mortensen P."/>
            <person name="Mann M."/>
        </authorList>
    </citation>
    <scope>PHOSPHORYLATION [LARGE SCALE ANALYSIS] AT SER-110</scope>
    <scope>IDENTIFICATION BY MASS SPECTROMETRY [LARGE SCALE ANALYSIS]</scope>
    <source>
        <tissue>Cervix carcinoma</tissue>
    </source>
</reference>
<reference key="8">
    <citation type="journal article" date="2008" name="J. Proteome Res.">
        <title>Combining protein-based IMAC, peptide-based IMAC, and MudPIT for efficient phosphoproteomic analysis.</title>
        <authorList>
            <person name="Cantin G.T."/>
            <person name="Yi W."/>
            <person name="Lu B."/>
            <person name="Park S.K."/>
            <person name="Xu T."/>
            <person name="Lee J.-D."/>
            <person name="Yates J.R. III"/>
        </authorList>
    </citation>
    <scope>PHOSPHORYLATION [LARGE SCALE ANALYSIS] AT SER-110</scope>
    <scope>IDENTIFICATION BY MASS SPECTROMETRY [LARGE SCALE ANALYSIS]</scope>
    <source>
        <tissue>Cervix carcinoma</tissue>
    </source>
</reference>
<reference key="9">
    <citation type="journal article" date="2008" name="Mol. Cell">
        <title>Kinase-selective enrichment enables quantitative phosphoproteomics of the kinome across the cell cycle.</title>
        <authorList>
            <person name="Daub H."/>
            <person name="Olsen J.V."/>
            <person name="Bairlein M."/>
            <person name="Gnad F."/>
            <person name="Oppermann F.S."/>
            <person name="Korner R."/>
            <person name="Greff Z."/>
            <person name="Keri G."/>
            <person name="Stemmann O."/>
            <person name="Mann M."/>
        </authorList>
    </citation>
    <scope>PHOSPHORYLATION [LARGE SCALE ANALYSIS] AT SER-95</scope>
    <scope>IDENTIFICATION BY MASS SPECTROMETRY [LARGE SCALE ANALYSIS]</scope>
    <source>
        <tissue>Cervix carcinoma</tissue>
    </source>
</reference>
<reference key="10">
    <citation type="journal article" date="2008" name="Proc. Natl. Acad. Sci. U.S.A.">
        <title>A quantitative atlas of mitotic phosphorylation.</title>
        <authorList>
            <person name="Dephoure N."/>
            <person name="Zhou C."/>
            <person name="Villen J."/>
            <person name="Beausoleil S.A."/>
            <person name="Bakalarski C.E."/>
            <person name="Elledge S.J."/>
            <person name="Gygi S.P."/>
        </authorList>
    </citation>
    <scope>PHOSPHORYLATION [LARGE SCALE ANALYSIS] AT SER-222; SER-233 AND SER-393</scope>
    <scope>IDENTIFICATION BY MASS SPECTROMETRY [LARGE SCALE ANALYSIS]</scope>
    <source>
        <tissue>Cervix carcinoma</tissue>
    </source>
</reference>
<reference key="11">
    <citation type="journal article" date="2009" name="Anal. Chem.">
        <title>Lys-N and trypsin cover complementary parts of the phosphoproteome in a refined SCX-based approach.</title>
        <authorList>
            <person name="Gauci S."/>
            <person name="Helbig A.O."/>
            <person name="Slijper M."/>
            <person name="Krijgsveld J."/>
            <person name="Heck A.J."/>
            <person name="Mohammed S."/>
        </authorList>
    </citation>
    <scope>IDENTIFICATION BY MASS SPECTROMETRY [LARGE SCALE ANALYSIS]</scope>
</reference>
<reference key="12">
    <citation type="journal article" date="2009" name="Sci. Signal.">
        <title>Quantitative phosphoproteomic analysis of T cell receptor signaling reveals system-wide modulation of protein-protein interactions.</title>
        <authorList>
            <person name="Mayya V."/>
            <person name="Lundgren D.H."/>
            <person name="Hwang S.-I."/>
            <person name="Rezaul K."/>
            <person name="Wu L."/>
            <person name="Eng J.K."/>
            <person name="Rodionov V."/>
            <person name="Han D.K."/>
        </authorList>
    </citation>
    <scope>IDENTIFICATION BY MASS SPECTROMETRY [LARGE SCALE ANALYSIS]</scope>
    <source>
        <tissue>Leukemic T-cell</tissue>
    </source>
</reference>
<reference key="13">
    <citation type="journal article" date="2010" name="Sci. Signal.">
        <title>Quantitative phosphoproteomics reveals widespread full phosphorylation site occupancy during mitosis.</title>
        <authorList>
            <person name="Olsen J.V."/>
            <person name="Vermeulen M."/>
            <person name="Santamaria A."/>
            <person name="Kumar C."/>
            <person name="Miller M.L."/>
            <person name="Jensen L.J."/>
            <person name="Gnad F."/>
            <person name="Cox J."/>
            <person name="Jensen T.S."/>
            <person name="Nigg E.A."/>
            <person name="Brunak S."/>
            <person name="Mann M."/>
        </authorList>
    </citation>
    <scope>PHOSPHORYLATION [LARGE SCALE ANALYSIS] AT SER-95; SER-110; SER-222 AND SER-393</scope>
    <scope>IDENTIFICATION BY MASS SPECTROMETRY [LARGE SCALE ANALYSIS]</scope>
    <source>
        <tissue>Cervix carcinoma</tissue>
    </source>
</reference>
<reference key="14">
    <citation type="journal article" date="2011" name="BMC Syst. Biol.">
        <title>Initial characterization of the human central proteome.</title>
        <authorList>
            <person name="Burkard T.R."/>
            <person name="Planyavsky M."/>
            <person name="Kaupe I."/>
            <person name="Breitwieser F.P."/>
            <person name="Buerckstuemmer T."/>
            <person name="Bennett K.L."/>
            <person name="Superti-Furga G."/>
            <person name="Colinge J."/>
        </authorList>
    </citation>
    <scope>IDENTIFICATION BY MASS SPECTROMETRY [LARGE SCALE ANALYSIS]</scope>
</reference>
<reference key="15">
    <citation type="journal article" date="2011" name="Sci. Signal.">
        <title>System-wide temporal characterization of the proteome and phosphoproteome of human embryonic stem cell differentiation.</title>
        <authorList>
            <person name="Rigbolt K.T."/>
            <person name="Prokhorova T.A."/>
            <person name="Akimov V."/>
            <person name="Henningsen J."/>
            <person name="Johansen P.T."/>
            <person name="Kratchmarova I."/>
            <person name="Kassem M."/>
            <person name="Mann M."/>
            <person name="Olsen J.V."/>
            <person name="Blagoev B."/>
        </authorList>
    </citation>
    <scope>IDENTIFICATION BY MASS SPECTROMETRY [LARGE SCALE ANALYSIS]</scope>
</reference>
<reference key="16">
    <citation type="journal article" date="2013" name="J. Proteome Res.">
        <title>Toward a comprehensive characterization of a human cancer cell phosphoproteome.</title>
        <authorList>
            <person name="Zhou H."/>
            <person name="Di Palma S."/>
            <person name="Preisinger C."/>
            <person name="Peng M."/>
            <person name="Polat A.N."/>
            <person name="Heck A.J."/>
            <person name="Mohammed S."/>
        </authorList>
    </citation>
    <scope>PHOSPHORYLATION [LARGE SCALE ANALYSIS] AT SER-95; SER-110; SER-129; SER-222; SER-393 AND SER-395</scope>
    <scope>IDENTIFICATION BY MASS SPECTROMETRY [LARGE SCALE ANALYSIS]</scope>
    <source>
        <tissue>Cervix carcinoma</tissue>
        <tissue>Erythroleukemia</tissue>
    </source>
</reference>
<reference key="17">
    <citation type="journal article" date="2014" name="J. Proteomics">
        <title>An enzyme assisted RP-RPLC approach for in-depth analysis of human liver phosphoproteome.</title>
        <authorList>
            <person name="Bian Y."/>
            <person name="Song C."/>
            <person name="Cheng K."/>
            <person name="Dong M."/>
            <person name="Wang F."/>
            <person name="Huang J."/>
            <person name="Sun D."/>
            <person name="Wang L."/>
            <person name="Ye M."/>
            <person name="Zou H."/>
        </authorList>
    </citation>
    <scope>PHOSPHORYLATION [LARGE SCALE ANALYSIS] AT SER-95; SER-110 AND SER-211</scope>
    <scope>IDENTIFICATION BY MASS SPECTROMETRY [LARGE SCALE ANALYSIS]</scope>
    <source>
        <tissue>Liver</tissue>
    </source>
</reference>
<reference key="18">
    <citation type="journal article" date="2014" name="Hum. Mol. Genet.">
        <title>LRP4 third beta-propeller domain mutations cause novel congenital myasthenia by compromising agrin-mediated MuSK signaling in a position-specific manner.</title>
        <authorList>
            <person name="Ohkawara B."/>
            <person name="Cabrera-Serrano M."/>
            <person name="Nakata T."/>
            <person name="Milone M."/>
            <person name="Asai N."/>
            <person name="Ito K."/>
            <person name="Ito M."/>
            <person name="Masuda A."/>
            <person name="Ito Y."/>
            <person name="Engel A.G."/>
            <person name="Ohno K."/>
        </authorList>
    </citation>
    <scope>VARIANT ARG-376</scope>
</reference>
<accession>Q13425</accession>
<accession>Q9BY09</accession>
<name>SNTB2_HUMAN</name>
<dbReference type="EMBL" id="U40572">
    <property type="protein sequence ID" value="AAC50449.1"/>
    <property type="molecule type" value="mRNA"/>
</dbReference>
<dbReference type="EMBL" id="AF243385">
    <property type="protein sequence ID" value="AAK15149.1"/>
    <property type="molecule type" value="mRNA"/>
</dbReference>
<dbReference type="EMBL" id="BC048215">
    <property type="protein sequence ID" value="AAH48215.1"/>
    <property type="molecule type" value="mRNA"/>
</dbReference>
<dbReference type="CCDS" id="CCDS10873.1">
    <molecule id="Q13425-1"/>
</dbReference>
<dbReference type="RefSeq" id="NP_006741.1">
    <molecule id="Q13425-1"/>
    <property type="nucleotide sequence ID" value="NM_006750.4"/>
</dbReference>
<dbReference type="PDB" id="2VRF">
    <property type="method" value="X-ray"/>
    <property type="resolution" value="2.00 A"/>
    <property type="chains" value="A/B/C/D=112-200"/>
</dbReference>
<dbReference type="PDBsum" id="2VRF"/>
<dbReference type="SMR" id="Q13425"/>
<dbReference type="BioGRID" id="112528">
    <property type="interactions" value="158"/>
</dbReference>
<dbReference type="CORUM" id="Q13425"/>
<dbReference type="FunCoup" id="Q13425">
    <property type="interactions" value="738"/>
</dbReference>
<dbReference type="IntAct" id="Q13425">
    <property type="interactions" value="99"/>
</dbReference>
<dbReference type="MINT" id="Q13425"/>
<dbReference type="STRING" id="9606.ENSP00000338191"/>
<dbReference type="GlyGen" id="Q13425">
    <property type="glycosylation" value="1 site, 1 O-linked glycan (1 site)"/>
</dbReference>
<dbReference type="iPTMnet" id="Q13425"/>
<dbReference type="PhosphoSitePlus" id="Q13425"/>
<dbReference type="SwissPalm" id="Q13425"/>
<dbReference type="BioMuta" id="SNTB2"/>
<dbReference type="DMDM" id="23822158"/>
<dbReference type="jPOST" id="Q13425"/>
<dbReference type="MassIVE" id="Q13425"/>
<dbReference type="PaxDb" id="9606-ENSP00000338191"/>
<dbReference type="PeptideAtlas" id="Q13425"/>
<dbReference type="ProteomicsDB" id="59410">
    <molecule id="Q13425-1"/>
</dbReference>
<dbReference type="ProteomicsDB" id="59411">
    <molecule id="Q13425-2"/>
</dbReference>
<dbReference type="Pumba" id="Q13425"/>
<dbReference type="Antibodypedia" id="656">
    <property type="antibodies" value="149 antibodies from 20 providers"/>
</dbReference>
<dbReference type="DNASU" id="6645"/>
<dbReference type="Ensembl" id="ENST00000336278.9">
    <molecule id="Q13425-1"/>
    <property type="protein sequence ID" value="ENSP00000338191.4"/>
    <property type="gene ID" value="ENSG00000168807.17"/>
</dbReference>
<dbReference type="Ensembl" id="ENST00000467311.5">
    <molecule id="Q13425-2"/>
    <property type="protein sequence ID" value="ENSP00000436443.1"/>
    <property type="gene ID" value="ENSG00000168807.17"/>
</dbReference>
<dbReference type="GeneID" id="6645"/>
<dbReference type="KEGG" id="hsa:6645"/>
<dbReference type="MANE-Select" id="ENST00000336278.9">
    <property type="protein sequence ID" value="ENSP00000338191.4"/>
    <property type="RefSeq nucleotide sequence ID" value="NM_006750.4"/>
    <property type="RefSeq protein sequence ID" value="NP_006741.1"/>
</dbReference>
<dbReference type="UCSC" id="uc002ewu.4">
    <molecule id="Q13425-1"/>
    <property type="organism name" value="human"/>
</dbReference>
<dbReference type="AGR" id="HGNC:11169"/>
<dbReference type="CTD" id="6645"/>
<dbReference type="DisGeNET" id="6645"/>
<dbReference type="GeneCards" id="SNTB2"/>
<dbReference type="HGNC" id="HGNC:11169">
    <property type="gene designation" value="SNTB2"/>
</dbReference>
<dbReference type="HPA" id="ENSG00000168807">
    <property type="expression patterns" value="Low tissue specificity"/>
</dbReference>
<dbReference type="MIM" id="600027">
    <property type="type" value="gene"/>
</dbReference>
<dbReference type="neXtProt" id="NX_Q13425"/>
<dbReference type="OpenTargets" id="ENSG00000168807"/>
<dbReference type="PharmGKB" id="PA36009"/>
<dbReference type="VEuPathDB" id="HostDB:ENSG00000168807"/>
<dbReference type="eggNOG" id="KOG3551">
    <property type="taxonomic scope" value="Eukaryota"/>
</dbReference>
<dbReference type="GeneTree" id="ENSGT00950000182863"/>
<dbReference type="HOGENOM" id="CLU_026406_3_1_1"/>
<dbReference type="InParanoid" id="Q13425"/>
<dbReference type="OMA" id="DGGRQHW"/>
<dbReference type="OrthoDB" id="409749at2759"/>
<dbReference type="PAN-GO" id="Q13425">
    <property type="GO annotations" value="3 GO annotations based on evolutionary models"/>
</dbReference>
<dbReference type="PhylomeDB" id="Q13425"/>
<dbReference type="TreeFam" id="TF317932"/>
<dbReference type="PathwayCommons" id="Q13425"/>
<dbReference type="Reactome" id="R-HSA-9913351">
    <property type="pathway name" value="Formation of the dystrophin-glycoprotein complex (DGC)"/>
</dbReference>
<dbReference type="SignaLink" id="Q13425"/>
<dbReference type="SIGNOR" id="Q13425"/>
<dbReference type="BioGRID-ORCS" id="6645">
    <property type="hits" value="9 hits in 1149 CRISPR screens"/>
</dbReference>
<dbReference type="CD-CODE" id="DEE660B4">
    <property type="entry name" value="Stress granule"/>
</dbReference>
<dbReference type="CD-CODE" id="FB4E32DD">
    <property type="entry name" value="Presynaptic clusters and postsynaptic densities"/>
</dbReference>
<dbReference type="ChiTaRS" id="SNTB2">
    <property type="organism name" value="human"/>
</dbReference>
<dbReference type="EvolutionaryTrace" id="Q13425"/>
<dbReference type="GeneWiki" id="SNTB2"/>
<dbReference type="GenomeRNAi" id="6645"/>
<dbReference type="Pharos" id="Q13425">
    <property type="development level" value="Tbio"/>
</dbReference>
<dbReference type="PRO" id="PR:Q13425"/>
<dbReference type="Proteomes" id="UP000005640">
    <property type="component" value="Chromosome 16"/>
</dbReference>
<dbReference type="RNAct" id="Q13425">
    <property type="molecule type" value="protein"/>
</dbReference>
<dbReference type="Bgee" id="ENSG00000168807">
    <property type="expression patterns" value="Expressed in tibia and 197 other cell types or tissues"/>
</dbReference>
<dbReference type="ExpressionAtlas" id="Q13425">
    <property type="expression patterns" value="baseline and differential"/>
</dbReference>
<dbReference type="GO" id="GO:0034451">
    <property type="term" value="C:centriolar satellite"/>
    <property type="evidence" value="ECO:0000314"/>
    <property type="project" value="HPA"/>
</dbReference>
<dbReference type="GO" id="GO:0036064">
    <property type="term" value="C:ciliary basal body"/>
    <property type="evidence" value="ECO:0000314"/>
    <property type="project" value="HPA"/>
</dbReference>
<dbReference type="GO" id="GO:0005737">
    <property type="term" value="C:cytoplasm"/>
    <property type="evidence" value="ECO:0000314"/>
    <property type="project" value="UniProtKB"/>
</dbReference>
<dbReference type="GO" id="GO:0005829">
    <property type="term" value="C:cytosol"/>
    <property type="evidence" value="ECO:0000314"/>
    <property type="project" value="HPA"/>
</dbReference>
<dbReference type="GO" id="GO:0016010">
    <property type="term" value="C:dystrophin-associated glycoprotein complex"/>
    <property type="evidence" value="ECO:0000318"/>
    <property type="project" value="GO_Central"/>
</dbReference>
<dbReference type="GO" id="GO:0005925">
    <property type="term" value="C:focal adhesion"/>
    <property type="evidence" value="ECO:0007005"/>
    <property type="project" value="UniProtKB"/>
</dbReference>
<dbReference type="GO" id="GO:0005794">
    <property type="term" value="C:Golgi apparatus"/>
    <property type="evidence" value="ECO:0000314"/>
    <property type="project" value="HPA"/>
</dbReference>
<dbReference type="GO" id="GO:0016020">
    <property type="term" value="C:membrane"/>
    <property type="evidence" value="ECO:0000304"/>
    <property type="project" value="ProtInc"/>
</dbReference>
<dbReference type="GO" id="GO:0005874">
    <property type="term" value="C:microtubule"/>
    <property type="evidence" value="ECO:0007669"/>
    <property type="project" value="UniProtKB-KW"/>
</dbReference>
<dbReference type="GO" id="GO:0005654">
    <property type="term" value="C:nucleoplasm"/>
    <property type="evidence" value="ECO:0000314"/>
    <property type="project" value="HPA"/>
</dbReference>
<dbReference type="GO" id="GO:0005886">
    <property type="term" value="C:plasma membrane"/>
    <property type="evidence" value="ECO:0000314"/>
    <property type="project" value="HPA"/>
</dbReference>
<dbReference type="GO" id="GO:0032991">
    <property type="term" value="C:protein-containing complex"/>
    <property type="evidence" value="ECO:0000314"/>
    <property type="project" value="MGI"/>
</dbReference>
<dbReference type="GO" id="GO:0045202">
    <property type="term" value="C:synapse"/>
    <property type="evidence" value="ECO:0000318"/>
    <property type="project" value="GO_Central"/>
</dbReference>
<dbReference type="GO" id="GO:0030658">
    <property type="term" value="C:transport vesicle membrane"/>
    <property type="evidence" value="ECO:0007669"/>
    <property type="project" value="UniProtKB-SubCell"/>
</dbReference>
<dbReference type="GO" id="GO:0003779">
    <property type="term" value="F:actin binding"/>
    <property type="evidence" value="ECO:0007669"/>
    <property type="project" value="UniProtKB-KW"/>
</dbReference>
<dbReference type="GO" id="GO:0005516">
    <property type="term" value="F:calmodulin binding"/>
    <property type="evidence" value="ECO:0007669"/>
    <property type="project" value="UniProtKB-KW"/>
</dbReference>
<dbReference type="GO" id="GO:0003723">
    <property type="term" value="F:RNA binding"/>
    <property type="evidence" value="ECO:0007005"/>
    <property type="project" value="UniProtKB"/>
</dbReference>
<dbReference type="GO" id="GO:0005198">
    <property type="term" value="F:structural molecule activity"/>
    <property type="evidence" value="ECO:0007669"/>
    <property type="project" value="InterPro"/>
</dbReference>
<dbReference type="CDD" id="cd06801">
    <property type="entry name" value="PDZ_syntrophin-like"/>
    <property type="match status" value="1"/>
</dbReference>
<dbReference type="CDD" id="cd01258">
    <property type="entry name" value="PHsplit_syntrophin"/>
    <property type="match status" value="1"/>
</dbReference>
<dbReference type="FunFam" id="2.30.42.10:FF:000052">
    <property type="entry name" value="Syntrophin beta 1"/>
    <property type="match status" value="1"/>
</dbReference>
<dbReference type="FunFam" id="2.30.29.30:FF:000251">
    <property type="entry name" value="Syntrophin beta 2"/>
    <property type="match status" value="1"/>
</dbReference>
<dbReference type="Gene3D" id="2.30.42.10">
    <property type="match status" value="1"/>
</dbReference>
<dbReference type="Gene3D" id="2.30.29.30">
    <property type="entry name" value="Pleckstrin-homology domain (PH domain)/Phosphotyrosine-binding domain (PTB)"/>
    <property type="match status" value="1"/>
</dbReference>
<dbReference type="InterPro" id="IPR001478">
    <property type="entry name" value="PDZ"/>
</dbReference>
<dbReference type="InterPro" id="IPR036034">
    <property type="entry name" value="PDZ_sf"/>
</dbReference>
<dbReference type="InterPro" id="IPR011993">
    <property type="entry name" value="PH-like_dom_sf"/>
</dbReference>
<dbReference type="InterPro" id="IPR001849">
    <property type="entry name" value="PH_domain"/>
</dbReference>
<dbReference type="InterPro" id="IPR041428">
    <property type="entry name" value="PHsplit_syntrophin"/>
</dbReference>
<dbReference type="InterPro" id="IPR015482">
    <property type="entry name" value="Syntrophin"/>
</dbReference>
<dbReference type="InterPro" id="IPR055108">
    <property type="entry name" value="Syntrophin_4th"/>
</dbReference>
<dbReference type="PANTHER" id="PTHR10554:SF8">
    <property type="entry name" value="BETA-2-SYNTROPHIN"/>
    <property type="match status" value="1"/>
</dbReference>
<dbReference type="PANTHER" id="PTHR10554">
    <property type="entry name" value="SYNTROPHIN"/>
    <property type="match status" value="1"/>
</dbReference>
<dbReference type="Pfam" id="PF00595">
    <property type="entry name" value="PDZ"/>
    <property type="match status" value="1"/>
</dbReference>
<dbReference type="Pfam" id="PF00169">
    <property type="entry name" value="PH"/>
    <property type="match status" value="1"/>
</dbReference>
<dbReference type="Pfam" id="PF18012">
    <property type="entry name" value="PH_17"/>
    <property type="match status" value="1"/>
</dbReference>
<dbReference type="Pfam" id="PF23012">
    <property type="entry name" value="Syntrophin_4th"/>
    <property type="match status" value="1"/>
</dbReference>
<dbReference type="SMART" id="SM00228">
    <property type="entry name" value="PDZ"/>
    <property type="match status" value="1"/>
</dbReference>
<dbReference type="SMART" id="SM00233">
    <property type="entry name" value="PH"/>
    <property type="match status" value="2"/>
</dbReference>
<dbReference type="SUPFAM" id="SSF50156">
    <property type="entry name" value="PDZ domain-like"/>
    <property type="match status" value="1"/>
</dbReference>
<dbReference type="SUPFAM" id="SSF50729">
    <property type="entry name" value="PH domain-like"/>
    <property type="match status" value="1"/>
</dbReference>
<dbReference type="PROSITE" id="PS50106">
    <property type="entry name" value="PDZ"/>
    <property type="match status" value="1"/>
</dbReference>
<dbReference type="PROSITE" id="PS50003">
    <property type="entry name" value="PH_DOMAIN"/>
    <property type="match status" value="1"/>
</dbReference>
<organism>
    <name type="scientific">Homo sapiens</name>
    <name type="common">Human</name>
    <dbReference type="NCBI Taxonomy" id="9606"/>
    <lineage>
        <taxon>Eukaryota</taxon>
        <taxon>Metazoa</taxon>
        <taxon>Chordata</taxon>
        <taxon>Craniata</taxon>
        <taxon>Vertebrata</taxon>
        <taxon>Euteleostomi</taxon>
        <taxon>Mammalia</taxon>
        <taxon>Eutheria</taxon>
        <taxon>Euarchontoglires</taxon>
        <taxon>Primates</taxon>
        <taxon>Haplorrhini</taxon>
        <taxon>Catarrhini</taxon>
        <taxon>Hominidae</taxon>
        <taxon>Homo</taxon>
    </lineage>
</organism>
<evidence type="ECO:0000250" key="1"/>
<evidence type="ECO:0000250" key="2">
    <source>
        <dbReference type="UniProtKB" id="Q61235"/>
    </source>
</evidence>
<evidence type="ECO:0000255" key="3">
    <source>
        <dbReference type="PROSITE-ProRule" id="PRU00143"/>
    </source>
</evidence>
<evidence type="ECO:0000255" key="4">
    <source>
        <dbReference type="PROSITE-ProRule" id="PRU00145"/>
    </source>
</evidence>
<evidence type="ECO:0000256" key="5">
    <source>
        <dbReference type="SAM" id="MobiDB-lite"/>
    </source>
</evidence>
<evidence type="ECO:0000269" key="6">
    <source>
    </source>
</evidence>
<evidence type="ECO:0000269" key="7">
    <source>
    </source>
</evidence>
<evidence type="ECO:0000269" key="8">
    <source>
    </source>
</evidence>
<evidence type="ECO:0000269" key="9">
    <source>
    </source>
</evidence>
<evidence type="ECO:0000269" key="10">
    <source>
    </source>
</evidence>
<evidence type="ECO:0000303" key="11">
    <source>
    </source>
</evidence>
<evidence type="ECO:0000305" key="12"/>
<evidence type="ECO:0007744" key="13">
    <source>
    </source>
</evidence>
<evidence type="ECO:0007744" key="14">
    <source>
    </source>
</evidence>
<evidence type="ECO:0007744" key="15">
    <source>
    </source>
</evidence>
<evidence type="ECO:0007744" key="16">
    <source>
    </source>
</evidence>
<evidence type="ECO:0007744" key="17">
    <source>
    </source>
</evidence>
<evidence type="ECO:0007744" key="18">
    <source>
    </source>
</evidence>
<evidence type="ECO:0007744" key="19">
    <source>
    </source>
</evidence>
<evidence type="ECO:0007829" key="20">
    <source>
        <dbReference type="PDB" id="2VRF"/>
    </source>
</evidence>